<proteinExistence type="inferred from homology"/>
<dbReference type="EC" id="1.8.4.11" evidence="1"/>
<dbReference type="EMBL" id="BA000031">
    <property type="protein sequence ID" value="BAC58569.1"/>
    <property type="molecule type" value="Genomic_DNA"/>
</dbReference>
<dbReference type="RefSeq" id="NP_796685.1">
    <property type="nucleotide sequence ID" value="NC_004603.1"/>
</dbReference>
<dbReference type="RefSeq" id="WP_005479646.1">
    <property type="nucleotide sequence ID" value="NC_004603.1"/>
</dbReference>
<dbReference type="SMR" id="Q87SW6"/>
<dbReference type="GeneID" id="1187773"/>
<dbReference type="KEGG" id="vpa:VP0306"/>
<dbReference type="PATRIC" id="fig|223926.6.peg.295"/>
<dbReference type="eggNOG" id="COG0225">
    <property type="taxonomic scope" value="Bacteria"/>
</dbReference>
<dbReference type="HOGENOM" id="CLU_031040_10_3_6"/>
<dbReference type="Proteomes" id="UP000002493">
    <property type="component" value="Chromosome 1"/>
</dbReference>
<dbReference type="GO" id="GO:0005737">
    <property type="term" value="C:cytoplasm"/>
    <property type="evidence" value="ECO:0007669"/>
    <property type="project" value="TreeGrafter"/>
</dbReference>
<dbReference type="GO" id="GO:0036456">
    <property type="term" value="F:L-methionine-(S)-S-oxide reductase activity"/>
    <property type="evidence" value="ECO:0007669"/>
    <property type="project" value="TreeGrafter"/>
</dbReference>
<dbReference type="GO" id="GO:0008113">
    <property type="term" value="F:peptide-methionine (S)-S-oxide reductase activity"/>
    <property type="evidence" value="ECO:0007669"/>
    <property type="project" value="UniProtKB-UniRule"/>
</dbReference>
<dbReference type="GO" id="GO:0034599">
    <property type="term" value="P:cellular response to oxidative stress"/>
    <property type="evidence" value="ECO:0007669"/>
    <property type="project" value="TreeGrafter"/>
</dbReference>
<dbReference type="GO" id="GO:0036211">
    <property type="term" value="P:protein modification process"/>
    <property type="evidence" value="ECO:0007669"/>
    <property type="project" value="UniProtKB-UniRule"/>
</dbReference>
<dbReference type="FunFam" id="3.30.1060.10:FF:000001">
    <property type="entry name" value="Peptide methionine sulfoxide reductase MsrA"/>
    <property type="match status" value="1"/>
</dbReference>
<dbReference type="Gene3D" id="3.30.1060.10">
    <property type="entry name" value="Peptide methionine sulphoxide reductase MsrA"/>
    <property type="match status" value="1"/>
</dbReference>
<dbReference type="HAMAP" id="MF_01401">
    <property type="entry name" value="MsrA"/>
    <property type="match status" value="1"/>
</dbReference>
<dbReference type="InterPro" id="IPR002569">
    <property type="entry name" value="Met_Sox_Rdtase_MsrA_dom"/>
</dbReference>
<dbReference type="InterPro" id="IPR036509">
    <property type="entry name" value="Met_Sox_Rdtase_MsrA_sf"/>
</dbReference>
<dbReference type="InterPro" id="IPR050162">
    <property type="entry name" value="MsrA_MetSO_reductase"/>
</dbReference>
<dbReference type="NCBIfam" id="TIGR00401">
    <property type="entry name" value="msrA"/>
    <property type="match status" value="1"/>
</dbReference>
<dbReference type="PANTHER" id="PTHR42799">
    <property type="entry name" value="MITOCHONDRIAL PEPTIDE METHIONINE SULFOXIDE REDUCTASE"/>
    <property type="match status" value="1"/>
</dbReference>
<dbReference type="PANTHER" id="PTHR42799:SF2">
    <property type="entry name" value="MITOCHONDRIAL PEPTIDE METHIONINE SULFOXIDE REDUCTASE"/>
    <property type="match status" value="1"/>
</dbReference>
<dbReference type="Pfam" id="PF01625">
    <property type="entry name" value="PMSR"/>
    <property type="match status" value="1"/>
</dbReference>
<dbReference type="SUPFAM" id="SSF55068">
    <property type="entry name" value="Peptide methionine sulfoxide reductase"/>
    <property type="match status" value="1"/>
</dbReference>
<sequence length="212" mass="23617">MLNKQTLISIEDALPGREQPMQIEDCHFVNQSSLTAPLAHHQQQILLGMGCFWGAERLFWQLDGVVSTSVGYAGGFTPNPTYEEVCTGKTGHTEVVRVVFDERVISLAQLLAVFWEKHDPTQGMRQGNDLGTQYRSAIYTYSQDQQEIADKSKLQYQQALEAELRSTITTEIVPAGPYYFAETYHQQYLAKNPDGYCGIGGTGVCFPPSLQG</sequence>
<gene>
    <name evidence="1" type="primary">msrA</name>
    <name type="ordered locus">VP0306</name>
</gene>
<organism>
    <name type="scientific">Vibrio parahaemolyticus serotype O3:K6 (strain RIMD 2210633)</name>
    <dbReference type="NCBI Taxonomy" id="223926"/>
    <lineage>
        <taxon>Bacteria</taxon>
        <taxon>Pseudomonadati</taxon>
        <taxon>Pseudomonadota</taxon>
        <taxon>Gammaproteobacteria</taxon>
        <taxon>Vibrionales</taxon>
        <taxon>Vibrionaceae</taxon>
        <taxon>Vibrio</taxon>
    </lineage>
</organism>
<reference key="1">
    <citation type="journal article" date="2003" name="Lancet">
        <title>Genome sequence of Vibrio parahaemolyticus: a pathogenic mechanism distinct from that of V. cholerae.</title>
        <authorList>
            <person name="Makino K."/>
            <person name="Oshima K."/>
            <person name="Kurokawa K."/>
            <person name="Yokoyama K."/>
            <person name="Uda T."/>
            <person name="Tagomori K."/>
            <person name="Iijima Y."/>
            <person name="Najima M."/>
            <person name="Nakano M."/>
            <person name="Yamashita A."/>
            <person name="Kubota Y."/>
            <person name="Kimura S."/>
            <person name="Yasunaga T."/>
            <person name="Honda T."/>
            <person name="Shinagawa H."/>
            <person name="Hattori M."/>
            <person name="Iida T."/>
        </authorList>
    </citation>
    <scope>NUCLEOTIDE SEQUENCE [LARGE SCALE GENOMIC DNA]</scope>
    <source>
        <strain>RIMD 2210633</strain>
    </source>
</reference>
<protein>
    <recommendedName>
        <fullName evidence="1">Peptide methionine sulfoxide reductase MsrA</fullName>
        <shortName evidence="1">Protein-methionine-S-oxide reductase</shortName>
        <ecNumber evidence="1">1.8.4.11</ecNumber>
    </recommendedName>
    <alternativeName>
        <fullName evidence="1">Peptide-methionine (S)-S-oxide reductase</fullName>
        <shortName evidence="1">Peptide Met(O) reductase</shortName>
    </alternativeName>
</protein>
<keyword id="KW-0560">Oxidoreductase</keyword>
<comment type="function">
    <text evidence="1">Has an important function as a repair enzyme for proteins that have been inactivated by oxidation. Catalyzes the reversible oxidation-reduction of methionine sulfoxide in proteins to methionine.</text>
</comment>
<comment type="catalytic activity">
    <reaction evidence="1">
        <text>L-methionyl-[protein] + [thioredoxin]-disulfide + H2O = L-methionyl-(S)-S-oxide-[protein] + [thioredoxin]-dithiol</text>
        <dbReference type="Rhea" id="RHEA:14217"/>
        <dbReference type="Rhea" id="RHEA-COMP:10698"/>
        <dbReference type="Rhea" id="RHEA-COMP:10700"/>
        <dbReference type="Rhea" id="RHEA-COMP:12313"/>
        <dbReference type="Rhea" id="RHEA-COMP:12315"/>
        <dbReference type="ChEBI" id="CHEBI:15377"/>
        <dbReference type="ChEBI" id="CHEBI:16044"/>
        <dbReference type="ChEBI" id="CHEBI:29950"/>
        <dbReference type="ChEBI" id="CHEBI:44120"/>
        <dbReference type="ChEBI" id="CHEBI:50058"/>
        <dbReference type="EC" id="1.8.4.11"/>
    </reaction>
</comment>
<comment type="catalytic activity">
    <reaction evidence="1">
        <text>[thioredoxin]-disulfide + L-methionine + H2O = L-methionine (S)-S-oxide + [thioredoxin]-dithiol</text>
        <dbReference type="Rhea" id="RHEA:19993"/>
        <dbReference type="Rhea" id="RHEA-COMP:10698"/>
        <dbReference type="Rhea" id="RHEA-COMP:10700"/>
        <dbReference type="ChEBI" id="CHEBI:15377"/>
        <dbReference type="ChEBI" id="CHEBI:29950"/>
        <dbReference type="ChEBI" id="CHEBI:50058"/>
        <dbReference type="ChEBI" id="CHEBI:57844"/>
        <dbReference type="ChEBI" id="CHEBI:58772"/>
        <dbReference type="EC" id="1.8.4.11"/>
    </reaction>
</comment>
<comment type="similarity">
    <text evidence="1">Belongs to the MsrA Met sulfoxide reductase family.</text>
</comment>
<accession>Q87SW6</accession>
<evidence type="ECO:0000255" key="1">
    <source>
        <dbReference type="HAMAP-Rule" id="MF_01401"/>
    </source>
</evidence>
<name>MSRA_VIBPA</name>
<feature type="chain" id="PRO_0000138608" description="Peptide methionine sulfoxide reductase MsrA">
    <location>
        <begin position="1"/>
        <end position="212"/>
    </location>
</feature>
<feature type="active site" evidence="1">
    <location>
        <position position="51"/>
    </location>
</feature>